<protein>
    <recommendedName>
        <fullName>Zinc-regulated GTPase metalloprotein activator 1</fullName>
        <ecNumber evidence="1">3.6.5.-</ecNumber>
    </recommendedName>
</protein>
<comment type="function">
    <text evidence="1">Zinc chaperone that directly transfers zinc cofactor to target metalloproteins, thereby activating them. Catalyzes zinc insertion into the active site of methionine aminopeptidase map1, which function to cleave the initiator methionine from polypeptides during or after protein translation. Mechanistically, the N-terminal psi-PxLVp motif binds to the C6H2-type zinc finger of inactive form of map1. After formation of the docked complex, zinc is transferred from the CXCC motif in the GTPase domain of zng1 to the zinc binding site in the peptidase domain of map1 in a process requiring GTP hydrolysis. GTP/GDP exchange is required for release of active map1.</text>
</comment>
<comment type="catalytic activity">
    <reaction evidence="1">
        <text>GTP + H2O = GDP + phosphate + H(+)</text>
        <dbReference type="Rhea" id="RHEA:19669"/>
        <dbReference type="ChEBI" id="CHEBI:15377"/>
        <dbReference type="ChEBI" id="CHEBI:15378"/>
        <dbReference type="ChEBI" id="CHEBI:37565"/>
        <dbReference type="ChEBI" id="CHEBI:43474"/>
        <dbReference type="ChEBI" id="CHEBI:58189"/>
    </reaction>
    <physiologicalReaction direction="left-to-right" evidence="1">
        <dbReference type="Rhea" id="RHEA:19670"/>
    </physiologicalReaction>
</comment>
<comment type="similarity">
    <text evidence="4">Belongs to the SIMIBI class G3E GTPase family. ZNG1 subfamily.</text>
</comment>
<dbReference type="EC" id="3.6.5.-" evidence="1"/>
<dbReference type="EMBL" id="CU329671">
    <property type="protein sequence ID" value="CAA20480.1"/>
    <property type="molecule type" value="Genomic_DNA"/>
</dbReference>
<dbReference type="PIR" id="T39481">
    <property type="entry name" value="T39481"/>
</dbReference>
<dbReference type="RefSeq" id="NP_596245.1">
    <property type="nucleotide sequence ID" value="NM_001022164.2"/>
</dbReference>
<dbReference type="SMR" id="O74310"/>
<dbReference type="BioGRID" id="276164">
    <property type="interactions" value="13"/>
</dbReference>
<dbReference type="FunCoup" id="O74310">
    <property type="interactions" value="406"/>
</dbReference>
<dbReference type="STRING" id="284812.O74310"/>
<dbReference type="iPTMnet" id="O74310"/>
<dbReference type="PaxDb" id="4896-SPBC15D4.05.1"/>
<dbReference type="EnsemblFungi" id="SPBC15D4.05.1">
    <property type="protein sequence ID" value="SPBC15D4.05.1:pep"/>
    <property type="gene ID" value="SPBC15D4.05"/>
</dbReference>
<dbReference type="GeneID" id="2539606"/>
<dbReference type="KEGG" id="spo:2539606"/>
<dbReference type="PomBase" id="SPBC15D4.05">
    <property type="gene designation" value="zng1"/>
</dbReference>
<dbReference type="VEuPathDB" id="FungiDB:SPBC15D4.05"/>
<dbReference type="eggNOG" id="KOG2743">
    <property type="taxonomic scope" value="Eukaryota"/>
</dbReference>
<dbReference type="HOGENOM" id="CLU_017452_0_1_1"/>
<dbReference type="InParanoid" id="O74310"/>
<dbReference type="OMA" id="GHSHMDP"/>
<dbReference type="PhylomeDB" id="O74310"/>
<dbReference type="PRO" id="PR:O74310"/>
<dbReference type="Proteomes" id="UP000002485">
    <property type="component" value="Chromosome II"/>
</dbReference>
<dbReference type="GO" id="GO:0005737">
    <property type="term" value="C:cytoplasm"/>
    <property type="evidence" value="ECO:0000318"/>
    <property type="project" value="GO_Central"/>
</dbReference>
<dbReference type="GO" id="GO:0005525">
    <property type="term" value="F:GTP binding"/>
    <property type="evidence" value="ECO:0007669"/>
    <property type="project" value="UniProtKB-KW"/>
</dbReference>
<dbReference type="GO" id="GO:0003924">
    <property type="term" value="F:GTPase activity"/>
    <property type="evidence" value="ECO:0000304"/>
    <property type="project" value="PomBase"/>
</dbReference>
<dbReference type="GO" id="GO:0008270">
    <property type="term" value="F:zinc ion binding"/>
    <property type="evidence" value="ECO:0000305"/>
    <property type="project" value="PomBase"/>
</dbReference>
<dbReference type="GO" id="GO:0006882">
    <property type="term" value="P:intracellular zinc ion homeostasis"/>
    <property type="evidence" value="ECO:0000304"/>
    <property type="project" value="PomBase"/>
</dbReference>
<dbReference type="CDD" id="cd03112">
    <property type="entry name" value="CobW-like"/>
    <property type="match status" value="1"/>
</dbReference>
<dbReference type="Gene3D" id="3.30.1220.10">
    <property type="entry name" value="CobW-like, C-terminal domain"/>
    <property type="match status" value="1"/>
</dbReference>
<dbReference type="Gene3D" id="3.40.50.300">
    <property type="entry name" value="P-loop containing nucleotide triphosphate hydrolases"/>
    <property type="match status" value="1"/>
</dbReference>
<dbReference type="InterPro" id="IPR036627">
    <property type="entry name" value="CobW-likC_sf"/>
</dbReference>
<dbReference type="InterPro" id="IPR011629">
    <property type="entry name" value="CobW-like_C"/>
</dbReference>
<dbReference type="InterPro" id="IPR003495">
    <property type="entry name" value="CobW/HypB/UreG_nucleotide-bd"/>
</dbReference>
<dbReference type="InterPro" id="IPR027417">
    <property type="entry name" value="P-loop_NTPase"/>
</dbReference>
<dbReference type="InterPro" id="IPR051316">
    <property type="entry name" value="Zinc-reg_GTPase_activator"/>
</dbReference>
<dbReference type="PANTHER" id="PTHR13748">
    <property type="entry name" value="COBW-RELATED"/>
    <property type="match status" value="1"/>
</dbReference>
<dbReference type="PANTHER" id="PTHR13748:SF31">
    <property type="entry name" value="ZINC-REGULATED GTPASE METALLOPROTEIN ACTIVATOR 1A-RELATED"/>
    <property type="match status" value="1"/>
</dbReference>
<dbReference type="Pfam" id="PF02492">
    <property type="entry name" value="cobW"/>
    <property type="match status" value="1"/>
</dbReference>
<dbReference type="Pfam" id="PF07683">
    <property type="entry name" value="CobW_C"/>
    <property type="match status" value="1"/>
</dbReference>
<dbReference type="SMART" id="SM00833">
    <property type="entry name" value="CobW_C"/>
    <property type="match status" value="1"/>
</dbReference>
<dbReference type="SUPFAM" id="SSF90002">
    <property type="entry name" value="Hypothetical protein YjiA, C-terminal domain"/>
    <property type="match status" value="1"/>
</dbReference>
<dbReference type="SUPFAM" id="SSF52540">
    <property type="entry name" value="P-loop containing nucleoside triphosphate hydrolases"/>
    <property type="match status" value="1"/>
</dbReference>
<keyword id="KW-0143">Chaperone</keyword>
<keyword id="KW-0342">GTP-binding</keyword>
<keyword id="KW-0378">Hydrolase</keyword>
<keyword id="KW-0479">Metal-binding</keyword>
<keyword id="KW-0547">Nucleotide-binding</keyword>
<keyword id="KW-1185">Reference proteome</keyword>
<keyword id="KW-0862">Zinc</keyword>
<evidence type="ECO:0000250" key="1">
    <source>
        <dbReference type="UniProtKB" id="P53729"/>
    </source>
</evidence>
<evidence type="ECO:0000250" key="2">
    <source>
        <dbReference type="UniProtKB" id="Q8VEH6"/>
    </source>
</evidence>
<evidence type="ECO:0000255" key="3"/>
<evidence type="ECO:0000305" key="4"/>
<evidence type="ECO:0000312" key="5">
    <source>
        <dbReference type="EMBL" id="CAA20480.1"/>
    </source>
</evidence>
<organism>
    <name type="scientific">Schizosaccharomyces pombe (strain 972 / ATCC 24843)</name>
    <name type="common">Fission yeast</name>
    <dbReference type="NCBI Taxonomy" id="284812"/>
    <lineage>
        <taxon>Eukaryota</taxon>
        <taxon>Fungi</taxon>
        <taxon>Dikarya</taxon>
        <taxon>Ascomycota</taxon>
        <taxon>Taphrinomycotina</taxon>
        <taxon>Schizosaccharomycetes</taxon>
        <taxon>Schizosaccharomycetales</taxon>
        <taxon>Schizosaccharomycetaceae</taxon>
        <taxon>Schizosaccharomyces</taxon>
    </lineage>
</organism>
<reference evidence="5" key="1">
    <citation type="journal article" date="2002" name="Nature">
        <title>The genome sequence of Schizosaccharomyces pombe.</title>
        <authorList>
            <person name="Wood V."/>
            <person name="Gwilliam R."/>
            <person name="Rajandream M.A."/>
            <person name="Lyne M.H."/>
            <person name="Lyne R."/>
            <person name="Stewart A."/>
            <person name="Sgouros J.G."/>
            <person name="Peat N."/>
            <person name="Hayles J."/>
            <person name="Baker S.G."/>
            <person name="Basham D."/>
            <person name="Bowman S."/>
            <person name="Brooks K."/>
            <person name="Brown D."/>
            <person name="Brown S."/>
            <person name="Chillingworth T."/>
            <person name="Churcher C.M."/>
            <person name="Collins M."/>
            <person name="Connor R."/>
            <person name="Cronin A."/>
            <person name="Davis P."/>
            <person name="Feltwell T."/>
            <person name="Fraser A."/>
            <person name="Gentles S."/>
            <person name="Goble A."/>
            <person name="Hamlin N."/>
            <person name="Harris D.E."/>
            <person name="Hidalgo J."/>
            <person name="Hodgson G."/>
            <person name="Holroyd S."/>
            <person name="Hornsby T."/>
            <person name="Howarth S."/>
            <person name="Huckle E.J."/>
            <person name="Hunt S."/>
            <person name="Jagels K."/>
            <person name="James K.D."/>
            <person name="Jones L."/>
            <person name="Jones M."/>
            <person name="Leather S."/>
            <person name="McDonald S."/>
            <person name="McLean J."/>
            <person name="Mooney P."/>
            <person name="Moule S."/>
            <person name="Mungall K.L."/>
            <person name="Murphy L.D."/>
            <person name="Niblett D."/>
            <person name="Odell C."/>
            <person name="Oliver K."/>
            <person name="O'Neil S."/>
            <person name="Pearson D."/>
            <person name="Quail M.A."/>
            <person name="Rabbinowitsch E."/>
            <person name="Rutherford K.M."/>
            <person name="Rutter S."/>
            <person name="Saunders D."/>
            <person name="Seeger K."/>
            <person name="Sharp S."/>
            <person name="Skelton J."/>
            <person name="Simmonds M.N."/>
            <person name="Squares R."/>
            <person name="Squares S."/>
            <person name="Stevens K."/>
            <person name="Taylor K."/>
            <person name="Taylor R.G."/>
            <person name="Tivey A."/>
            <person name="Walsh S.V."/>
            <person name="Warren T."/>
            <person name="Whitehead S."/>
            <person name="Woodward J.R."/>
            <person name="Volckaert G."/>
            <person name="Aert R."/>
            <person name="Robben J."/>
            <person name="Grymonprez B."/>
            <person name="Weltjens I."/>
            <person name="Vanstreels E."/>
            <person name="Rieger M."/>
            <person name="Schaefer M."/>
            <person name="Mueller-Auer S."/>
            <person name="Gabel C."/>
            <person name="Fuchs M."/>
            <person name="Duesterhoeft A."/>
            <person name="Fritzc C."/>
            <person name="Holzer E."/>
            <person name="Moestl D."/>
            <person name="Hilbert H."/>
            <person name="Borzym K."/>
            <person name="Langer I."/>
            <person name="Beck A."/>
            <person name="Lehrach H."/>
            <person name="Reinhardt R."/>
            <person name="Pohl T.M."/>
            <person name="Eger P."/>
            <person name="Zimmermann W."/>
            <person name="Wedler H."/>
            <person name="Wambutt R."/>
            <person name="Purnelle B."/>
            <person name="Goffeau A."/>
            <person name="Cadieu E."/>
            <person name="Dreano S."/>
            <person name="Gloux S."/>
            <person name="Lelaure V."/>
            <person name="Mottier S."/>
            <person name="Galibert F."/>
            <person name="Aves S.J."/>
            <person name="Xiang Z."/>
            <person name="Hunt C."/>
            <person name="Moore K."/>
            <person name="Hurst S.M."/>
            <person name="Lucas M."/>
            <person name="Rochet M."/>
            <person name="Gaillardin C."/>
            <person name="Tallada V.A."/>
            <person name="Garzon A."/>
            <person name="Thode G."/>
            <person name="Daga R.R."/>
            <person name="Cruzado L."/>
            <person name="Jimenez J."/>
            <person name="Sanchez M."/>
            <person name="del Rey F."/>
            <person name="Benito J."/>
            <person name="Dominguez A."/>
            <person name="Revuelta J.L."/>
            <person name="Moreno S."/>
            <person name="Armstrong J."/>
            <person name="Forsburg S.L."/>
            <person name="Cerutti L."/>
            <person name="Lowe T."/>
            <person name="McCombie W.R."/>
            <person name="Paulsen I."/>
            <person name="Potashkin J."/>
            <person name="Shpakovski G.V."/>
            <person name="Ussery D."/>
            <person name="Barrell B.G."/>
            <person name="Nurse P."/>
        </authorList>
    </citation>
    <scope>NUCLEOTIDE SEQUENCE [LARGE SCALE GENOMIC DNA]</scope>
    <source>
        <strain>972 / ATCC 24843</strain>
    </source>
</reference>
<name>ZNG1_SCHPO</name>
<sequence>MDFEIENESEIPQLVDVEEVNTQPHSETLSVPTVSSNNDIDSFEQQSDFLLVDHDSTLDPVPVTILTGFLGAGKTSLLRSILENRNGKRVAVLMNEVGDSGDLERSLMEDVGGEELYEEWVALSNGCMCCTVKDNGIKALEKIMRQKGRFDNIVIETTGIANPGPLAQTFWLDDALKSDVKLDGIVTVIDCKNIDNILKDESDIGFIQISHADCLILNKTDLISSEALSVVRQTILKINCLAKIIETTYGRLDDISEILDLDAYGNENTSNLEWSIQRSNDSNINCSTCLDVDCQHLHSLDTHSLDISTHTFKLPPLMSKEVFQQFLQWVRHTLWSCLEEGEDEEFMIYRSKGIFNKDDGSWYIFQGVREVFEIMPLSEKPRAFLEKDIHPEIILIGRNLHRISPFVVGNQ</sequence>
<feature type="chain" id="PRO_0000343521" description="Zinc-regulated GTPase metalloprotein activator 1">
    <location>
        <begin position="1"/>
        <end position="411"/>
    </location>
</feature>
<feature type="domain" description="CobW C-terminal" evidence="3">
    <location>
        <begin position="307"/>
        <end position="411"/>
    </location>
</feature>
<feature type="short sequence motif" description="psi-PxLVp motif" evidence="2">
    <location>
        <begin position="9"/>
        <end position="16"/>
    </location>
</feature>
<feature type="short sequence motif" description="CXCC motif" evidence="3">
    <location>
        <begin position="127"/>
        <end position="130"/>
    </location>
</feature>
<feature type="binding site" evidence="3">
    <location>
        <begin position="68"/>
        <end position="75"/>
    </location>
    <ligand>
        <name>GTP</name>
        <dbReference type="ChEBI" id="CHEBI:37565"/>
    </ligand>
</feature>
<feature type="binding site" evidence="2">
    <location>
        <position position="127"/>
    </location>
    <ligand>
        <name>Zn(2+)</name>
        <dbReference type="ChEBI" id="CHEBI:29105"/>
    </ligand>
</feature>
<feature type="binding site" evidence="2">
    <location>
        <position position="129"/>
    </location>
    <ligand>
        <name>Zn(2+)</name>
        <dbReference type="ChEBI" id="CHEBI:29105"/>
    </ligand>
</feature>
<feature type="binding site" evidence="3">
    <location>
        <begin position="130"/>
        <end position="134"/>
    </location>
    <ligand>
        <name>GTP</name>
        <dbReference type="ChEBI" id="CHEBI:37565"/>
    </ligand>
</feature>
<feature type="binding site" evidence="2">
    <location>
        <position position="130"/>
    </location>
    <ligand>
        <name>Zn(2+)</name>
        <dbReference type="ChEBI" id="CHEBI:29105"/>
    </ligand>
</feature>
<feature type="binding site" evidence="3">
    <location>
        <begin position="218"/>
        <end position="221"/>
    </location>
    <ligand>
        <name>GTP</name>
        <dbReference type="ChEBI" id="CHEBI:37565"/>
    </ligand>
</feature>
<proteinExistence type="inferred from homology"/>
<accession>O74310</accession>
<gene>
    <name type="primary">zng1</name>
    <name type="ORF">SPBC15D4.05</name>
</gene>